<dbReference type="EMBL" id="EF453358">
    <property type="protein sequence ID" value="ABR32125.1"/>
    <property type="molecule type" value="mRNA"/>
</dbReference>
<dbReference type="IntAct" id="A9Q1L0">
    <property type="interactions" value="1"/>
</dbReference>
<dbReference type="Proteomes" id="UP000174021">
    <property type="component" value="Genome"/>
</dbReference>
<dbReference type="GO" id="GO:0044172">
    <property type="term" value="C:host cell endoplasmic reticulum-Golgi intermediate compartment"/>
    <property type="evidence" value="ECO:0007669"/>
    <property type="project" value="UniProtKB-SubCell"/>
</dbReference>
<dbReference type="GO" id="GO:0020002">
    <property type="term" value="C:host cell plasma membrane"/>
    <property type="evidence" value="ECO:0007669"/>
    <property type="project" value="UniProtKB-SubCell"/>
</dbReference>
<dbReference type="GO" id="GO:0044168">
    <property type="term" value="C:host cell rough endoplasmic reticulum"/>
    <property type="evidence" value="ECO:0007669"/>
    <property type="project" value="UniProtKB-SubCell"/>
</dbReference>
<dbReference type="GO" id="GO:0016020">
    <property type="term" value="C:membrane"/>
    <property type="evidence" value="ECO:0007669"/>
    <property type="project" value="UniProtKB-KW"/>
</dbReference>
<dbReference type="GO" id="GO:0039624">
    <property type="term" value="C:viral outer capsid"/>
    <property type="evidence" value="ECO:0007669"/>
    <property type="project" value="UniProtKB-UniRule"/>
</dbReference>
<dbReference type="GO" id="GO:0039665">
    <property type="term" value="P:permeabilization of host organelle membrane involved in viral entry into host cell"/>
    <property type="evidence" value="ECO:0007669"/>
    <property type="project" value="UniProtKB-UniRule"/>
</dbReference>
<dbReference type="GO" id="GO:0019062">
    <property type="term" value="P:virion attachment to host cell"/>
    <property type="evidence" value="ECO:0007669"/>
    <property type="project" value="UniProtKB-UniRule"/>
</dbReference>
<dbReference type="HAMAP" id="MF_04125">
    <property type="entry name" value="Rota_VP4"/>
    <property type="match status" value="1"/>
</dbReference>
<dbReference type="InterPro" id="IPR042546">
    <property type="entry name" value="Rota_A_VP4"/>
</dbReference>
<dbReference type="InterPro" id="IPR035330">
    <property type="entry name" value="Rota_VP4_MID"/>
</dbReference>
<dbReference type="InterPro" id="IPR038017">
    <property type="entry name" value="Rota_VP4_MID_sf"/>
</dbReference>
<dbReference type="Pfam" id="PF17477">
    <property type="entry name" value="Rota_VP4_MID"/>
    <property type="match status" value="1"/>
</dbReference>
<dbReference type="SUPFAM" id="SSF111379">
    <property type="entry name" value="VP4 membrane interaction domain"/>
    <property type="match status" value="1"/>
</dbReference>
<name>VP4_ROTB2</name>
<protein>
    <recommendedName>
        <fullName evidence="1">Outer capsid protein VP4</fullName>
    </recommendedName>
    <alternativeName>
        <fullName evidence="1">Hemagglutinin</fullName>
    </alternativeName>
    <component>
        <recommendedName>
            <fullName evidence="2">Outer capsid protein VP8*</fullName>
        </recommendedName>
    </component>
    <component>
        <recommendedName>
            <fullName evidence="2">Outer capsid protein VP5*</fullName>
        </recommendedName>
    </component>
</protein>
<comment type="function">
    <molecule>Outer capsid protein VP4</molecule>
    <text evidence="1">Spike-forming protein that mediates virion attachment to the host epithelial cell receptors and plays a major role in cell penetration, determination of host range restriction and virulence. Rotavirus attachment and entry into the host cell probably involves multiple sequential contacts between the outer capsid proteins VP4 and VP7, and the cell receptors. It is subsequently lost, together with VP7, following virus entry into the host cell. Following entry into the host cell, low intracellular or intravesicular Ca(2+) concentration probably causes the calcium-stabilized VP7 trimers to dissociate from the virion. This step is probably necessary for the membrane-disrupting entry step and the release of VP4, which is locked onto the virion by VP7.</text>
</comment>
<comment type="function">
    <molecule>Outer capsid protein VP5*</molecule>
    <text evidence="2">Forms the spike 'foot' and 'body' and acts as a membrane permeabilization protein that mediates release of viral particles from endosomal compartments into the cytoplasm. During entry, the part of VP5* that protrudes from the virus folds back on itself and reorganizes from a local dimer to a trimer. This reorganization may be linked to membrane penetration.</text>
</comment>
<comment type="function">
    <molecule>Outer capsid protein VP8*</molecule>
    <text evidence="2">Forms the head of the spikes and mediates the recognition of specific host cell surface glycans. It is the viral hemagglutinin and an important target of neutralizing antibodies.</text>
</comment>
<comment type="subunit">
    <molecule>Outer capsid protein VP4</molecule>
    <text evidence="2">Homotrimer. VP4 adopts a dimeric appearance above the capsid surface, while forming a trimeric base anchored inside the capsid layer. Only hints of the third molecule are observed above the capsid surface. It probably performs a series of molecular rearrangements during viral entry. Prior to trypsin cleavage, it is flexible. The priming trypsin cleavage triggers its rearrangement into rigid spikes with approximate two-fold symmetry of their protruding parts. After an unknown second triggering event, cleaved VP4 may undergo another rearrangement, in which two VP5* subunits fold back on themselves and join a third subunit to form a tightly associated trimer, shaped like a folded umbrella. Interacts with VP6. Interacts with VP7.</text>
</comment>
<comment type="subunit">
    <molecule>Outer capsid protein VP5*</molecule>
    <text evidence="2">Homotrimer. The trimer is coiled-coil stabilized by its C-terminus, however, its N-terminus, known as antigen domain or 'body', seems to be flexible allowing it to self-associate either as a dimer or a trimer.</text>
</comment>
<comment type="subcellular location">
    <molecule>Outer capsid protein VP4</molecule>
    <subcellularLocation>
        <location evidence="1">Virion</location>
    </subcellularLocation>
    <subcellularLocation>
        <location evidence="1">Host rough endoplasmic reticulum</location>
    </subcellularLocation>
    <subcellularLocation>
        <location evidence="1">Host cell membrane</location>
    </subcellularLocation>
    <subcellularLocation>
        <location evidence="1">Host endoplasmic reticulum-Golgi intermediate compartment</location>
    </subcellularLocation>
    <text evidence="1">The outer layer contains 180 copies of VP4, grouped as 60 dimers. Immature double-layered particles assembled in the cytoplasm bud across the membrane of the endoplasmic reticulum, acquiring during this process a transient lipid membrane that is modified with the ER resident viral glycoproteins NSP4 and VP7; these enveloped particles also contain VP4. As the particles move towards the interior of the ER cisternae, the transient lipid membrane and the non-structural protein NSP4 are lost, while the virus surface proteins VP4 and VP7 rearrange to form the outermost virus protein layer, yielding mature infectious triple-layered particles.</text>
</comment>
<comment type="domain">
    <molecule>Outer capsid protein VP4</molecule>
    <text evidence="1">The VP4 spike is divided into a foot, a stalk and body, and a head.</text>
</comment>
<comment type="PTM">
    <molecule>Outer capsid protein VP4</molecule>
    <text evidence="1">Proteolytic cleavage by trypsin results in activation of VP4 functions and greatly increases infectivity. The penetration into the host cell is dependent on trypsin treatment of VP4. It produces two peptides, VP5* and VP8* that remain associated with the virion. Cleavage of VP4 by trypsin probably occurs in vivo in the lumen of the intestine prior to infection of enterocytes. Trypsin seems to be incorporated into the three-layered viral particles but remains inactive as long as the viral outer capsid is intact and would only be activated upon the solubilization of the latter.</text>
</comment>
<comment type="similarity">
    <text evidence="1">Belongs to the rotavirus VP4 family.</text>
</comment>
<organism>
    <name type="scientific">Rotavirus X (isolate RVX/Human/Bangladesh/NADRV-B219/2002/GXP[X])</name>
    <name type="common">RV ADRV-N</name>
    <name type="synonym">Rotavirus (isolate novel adult diarrhea rotavirus-B219)</name>
    <dbReference type="NCBI Taxonomy" id="348136"/>
    <lineage>
        <taxon>Viruses</taxon>
        <taxon>Riboviria</taxon>
        <taxon>Orthornavirae</taxon>
        <taxon>Duplornaviricota</taxon>
        <taxon>Resentoviricetes</taxon>
        <taxon>Reovirales</taxon>
        <taxon>Sedoreoviridae</taxon>
        <taxon>Rotavirus</taxon>
    </lineage>
</organism>
<feature type="chain" id="PRO_0000369842" description="Outer capsid protein VP4" evidence="1">
    <location>
        <begin position="1"/>
        <end position="826"/>
    </location>
</feature>
<feature type="chain" id="PRO_0000369843" description="Outer capsid protein VP8*">
    <location>
        <begin position="1"/>
        <end position="249"/>
    </location>
</feature>
<feature type="chain" id="PRO_0000369844" description="Outer capsid protein VP5*">
    <location>
        <begin position="263"/>
        <end position="826"/>
    </location>
</feature>
<feature type="site" description="Probable cleavage" evidence="2">
    <location>
        <begin position="249"/>
        <end position="250"/>
    </location>
</feature>
<feature type="site" description="Probable cleavage" evidence="2">
    <location>
        <begin position="262"/>
        <end position="263"/>
    </location>
</feature>
<keyword id="KW-0167">Capsid protein</keyword>
<keyword id="KW-0348">Hemagglutinin</keyword>
<keyword id="KW-1032">Host cell membrane</keyword>
<keyword id="KW-1038">Host endoplasmic reticulum</keyword>
<keyword id="KW-1043">Host membrane</keyword>
<keyword id="KW-0945">Host-virus interaction</keyword>
<keyword id="KW-0472">Membrane</keyword>
<keyword id="KW-1152">Outer capsid protein</keyword>
<keyword id="KW-1161">Viral attachment to host cell</keyword>
<keyword id="KW-1162">Viral penetration into host cytoplasm</keyword>
<keyword id="KW-1173">Viral penetration via permeabilization of host membrane</keyword>
<keyword id="KW-0946">Virion</keyword>
<keyword id="KW-1160">Virus entry into host cell</keyword>
<proteinExistence type="evidence at protein level"/>
<sequence>MSLRSLLITTEAVGETTQTSDHQTSFSTRTYNEINDRPSLRVEKDGEKAYCFKNLDPVRYDTRMGEYPFDYGGQSTENNQLQFDLFTKDLMADTDIGLSDDVRDDLKRQIKEYYQQGYRAIFLIRPQNQEQQYIASYSSTNLNFTSQLSVGVNLSVLNKIQENKLHIYSTQPHIPSVGCEMITKIFRTDVDNENSLINYSVPVTVTISVTKATFEDTFVWNQNNDYPNMNYKDLIPAVTKNSIYHDVKRITKIHEYINSKKKKNGVGKIGGIQIAESKDGFWKILTKNYQIKLKFGIEGYGVMGGTFGNWLIDSGFKTVETNYEYQRNGKTINATTVASVKPSRKCGTRSPVFGQLQFSGEMMVLSHNDILTVFYTEREWALSNAIYAKNFATDFKRQFEVTAQSDELLVRTNVVPHTIKNTPGKALMEYSHGGFGQIDTSDYTGMALTFRFRCVSEDLPEGYYDKDKALTFANVGLTSFQDRQETNGTYWVYNTSTVGFGSCYPKKEFEYDINVTYTTLLPSDPEFTTGGTNYAQSVTAVLEESFINLQNQVNEMLTRMNISDLTSGVMSVFSVATSFPQILDGISDLLKAASSAFKKVKGKVGNVAKRLRGKRYVRLFDEDISIEETPRFLDSIRSSRRPSILSNMFNDDETFTALHTLASRTNSVASDVTYIQPIITTRIANSTPPVIAPASSVTYAKLKDISKIINAEIDPKSIMEFNQVSNTISILDSTKKLAQYAVDPDVIDGILNKMVGGHARSLFSLKVRKHLLDAVEKDAFVKYNYHDLMGKLLNDRELLDITNNLSSQKQFELAKEFRDLLINALA</sequence>
<organismHost>
    <name type="scientific">Homo sapiens</name>
    <name type="common">Human</name>
    <dbReference type="NCBI Taxonomy" id="9606"/>
</organismHost>
<accession>A9Q1L0</accession>
<evidence type="ECO:0000255" key="1">
    <source>
        <dbReference type="HAMAP-Rule" id="MF_04125"/>
    </source>
</evidence>
<evidence type="ECO:0000305" key="2"/>
<reference key="1">
    <citation type="journal article" date="2008" name="J. Med. Virol.">
        <title>Whole genomic characterization of a human rotavirus strain B219 belonging to a novel group of the genus Rotavirus.</title>
        <authorList>
            <person name="Nagashima S."/>
            <person name="Kobayashi N."/>
            <person name="Ishino M."/>
            <person name="Alam M.M."/>
            <person name="Ahmed M.U."/>
            <person name="Paul S.K."/>
            <person name="Ganesh B."/>
            <person name="Chawla-Sarkar M."/>
            <person name="Krishnan T."/>
            <person name="Naik T.N."/>
            <person name="Wang Y.-H."/>
        </authorList>
    </citation>
    <scope>NUCLEOTIDE SEQUENCE [MRNA]</scope>
    <scope>PUTATIVE CLEAVAGE SITES</scope>
</reference>